<organism>
    <name type="scientific">Homo sapiens</name>
    <name type="common">Human</name>
    <dbReference type="NCBI Taxonomy" id="9606"/>
    <lineage>
        <taxon>Eukaryota</taxon>
        <taxon>Metazoa</taxon>
        <taxon>Chordata</taxon>
        <taxon>Craniata</taxon>
        <taxon>Vertebrata</taxon>
        <taxon>Euteleostomi</taxon>
        <taxon>Mammalia</taxon>
        <taxon>Eutheria</taxon>
        <taxon>Euarchontoglires</taxon>
        <taxon>Primates</taxon>
        <taxon>Haplorrhini</taxon>
        <taxon>Catarrhini</taxon>
        <taxon>Hominidae</taxon>
        <taxon>Homo</taxon>
    </lineage>
</organism>
<dbReference type="EMBL" id="AB209067">
    <property type="protein sequence ID" value="BAD92304.1"/>
    <property type="status" value="ALT_INIT"/>
    <property type="molecule type" value="mRNA"/>
</dbReference>
<dbReference type="EMBL" id="AC005331">
    <property type="protein sequence ID" value="AAC27666.1"/>
    <property type="status" value="ALT_INIT"/>
    <property type="molecule type" value="Genomic_DNA"/>
</dbReference>
<dbReference type="EMBL" id="AC006505">
    <property type="status" value="NOT_ANNOTATED_CDS"/>
    <property type="molecule type" value="Genomic_DNA"/>
</dbReference>
<dbReference type="EMBL" id="AC010649">
    <property type="status" value="NOT_ANNOTATED_CDS"/>
    <property type="molecule type" value="Genomic_DNA"/>
</dbReference>
<dbReference type="EMBL" id="AC123911">
    <property type="status" value="NOT_ANNOTATED_CDS"/>
    <property type="molecule type" value="Genomic_DNA"/>
</dbReference>
<dbReference type="EMBL" id="CH471139">
    <property type="protein sequence ID" value="EAW69327.1"/>
    <property type="molecule type" value="Genomic_DNA"/>
</dbReference>
<dbReference type="EMBL" id="CH471139">
    <property type="protein sequence ID" value="EAW69328.1"/>
    <property type="molecule type" value="Genomic_DNA"/>
</dbReference>
<dbReference type="EMBL" id="BC028101">
    <property type="protein sequence ID" value="AAH28101.1"/>
    <property type="molecule type" value="mRNA"/>
</dbReference>
<dbReference type="EMBL" id="AF329266">
    <property type="protein sequence ID" value="AAK07476.1"/>
    <property type="status" value="ALT_SEQ"/>
    <property type="molecule type" value="mRNA"/>
</dbReference>
<dbReference type="EMBL" id="AF248649">
    <property type="protein sequence ID" value="AAF86231.1"/>
    <property type="molecule type" value="mRNA"/>
</dbReference>
<dbReference type="CCDS" id="CCDS12106.1">
    <molecule id="Q8N6W0-1"/>
</dbReference>
<dbReference type="CCDS" id="CCDS54197.1">
    <molecule id="Q8N6W0-2"/>
</dbReference>
<dbReference type="RefSeq" id="NP_001166144.1">
    <molecule id="Q8N6W0-2"/>
    <property type="nucleotide sequence ID" value="NM_001172673.2"/>
</dbReference>
<dbReference type="RefSeq" id="NP_068757.2">
    <molecule id="Q8N6W0-1"/>
    <property type="nucleotide sequence ID" value="NM_021938.3"/>
</dbReference>
<dbReference type="RefSeq" id="XP_006722895.1">
    <molecule id="Q8N6W0-1"/>
    <property type="nucleotide sequence ID" value="XM_006722832.2"/>
</dbReference>
<dbReference type="RefSeq" id="XP_054177668.1">
    <molecule id="Q8N6W0-1"/>
    <property type="nucleotide sequence ID" value="XM_054321693.1"/>
</dbReference>
<dbReference type="PDB" id="2DNH">
    <property type="method" value="NMR"/>
    <property type="chains" value="A=126-217"/>
</dbReference>
<dbReference type="PDBsum" id="2DNH"/>
<dbReference type="SMR" id="Q8N6W0"/>
<dbReference type="BioGRID" id="121954">
    <property type="interactions" value="36"/>
</dbReference>
<dbReference type="FunCoup" id="Q8N6W0">
    <property type="interactions" value="247"/>
</dbReference>
<dbReference type="IntAct" id="Q8N6W0">
    <property type="interactions" value="36"/>
</dbReference>
<dbReference type="STRING" id="9606.ENSP00000292672"/>
<dbReference type="iPTMnet" id="Q8N6W0"/>
<dbReference type="PhosphoSitePlus" id="Q8N6W0"/>
<dbReference type="BioMuta" id="CELF5"/>
<dbReference type="DMDM" id="74762534"/>
<dbReference type="MassIVE" id="Q8N6W0"/>
<dbReference type="PaxDb" id="9606-ENSP00000292672"/>
<dbReference type="PeptideAtlas" id="Q8N6W0"/>
<dbReference type="ProteomicsDB" id="72243">
    <molecule id="Q8N6W0-1"/>
</dbReference>
<dbReference type="ProteomicsDB" id="72244">
    <molecule id="Q8N6W0-2"/>
</dbReference>
<dbReference type="Antibodypedia" id="23187">
    <property type="antibodies" value="152 antibodies from 25 providers"/>
</dbReference>
<dbReference type="DNASU" id="60680"/>
<dbReference type="Ensembl" id="ENST00000292672.7">
    <molecule id="Q8N6W0-1"/>
    <property type="protein sequence ID" value="ENSP00000292672.1"/>
    <property type="gene ID" value="ENSG00000161082.13"/>
</dbReference>
<dbReference type="Ensembl" id="ENST00000541430.6">
    <molecule id="Q8N6W0-2"/>
    <property type="protein sequence ID" value="ENSP00000443498.1"/>
    <property type="gene ID" value="ENSG00000161082.13"/>
</dbReference>
<dbReference type="GeneID" id="60680"/>
<dbReference type="KEGG" id="hsa:60680"/>
<dbReference type="MANE-Select" id="ENST00000292672.7">
    <property type="protein sequence ID" value="ENSP00000292672.1"/>
    <property type="RefSeq nucleotide sequence ID" value="NM_021938.4"/>
    <property type="RefSeq protein sequence ID" value="NP_068757.2"/>
</dbReference>
<dbReference type="UCSC" id="uc002lxm.4">
    <molecule id="Q8N6W0-1"/>
    <property type="organism name" value="human"/>
</dbReference>
<dbReference type="AGR" id="HGNC:14058"/>
<dbReference type="CTD" id="60680"/>
<dbReference type="DisGeNET" id="60680"/>
<dbReference type="GeneCards" id="CELF5"/>
<dbReference type="HGNC" id="HGNC:14058">
    <property type="gene designation" value="CELF5"/>
</dbReference>
<dbReference type="HPA" id="ENSG00000161082">
    <property type="expression patterns" value="Tissue enriched (brain)"/>
</dbReference>
<dbReference type="MIM" id="612680">
    <property type="type" value="gene"/>
</dbReference>
<dbReference type="neXtProt" id="NX_Q8N6W0"/>
<dbReference type="OpenTargets" id="ENSG00000161082"/>
<dbReference type="PharmGKB" id="PA25429"/>
<dbReference type="VEuPathDB" id="HostDB:ENSG00000161082"/>
<dbReference type="eggNOG" id="KOG0146">
    <property type="taxonomic scope" value="Eukaryota"/>
</dbReference>
<dbReference type="GeneTree" id="ENSGT00940000154201"/>
<dbReference type="HOGENOM" id="CLU_015367_0_1_1"/>
<dbReference type="InParanoid" id="Q8N6W0"/>
<dbReference type="OMA" id="QYAAMYP"/>
<dbReference type="OrthoDB" id="410044at2759"/>
<dbReference type="PAN-GO" id="Q8N6W0">
    <property type="GO annotations" value="6 GO annotations based on evolutionary models"/>
</dbReference>
<dbReference type="PhylomeDB" id="Q8N6W0"/>
<dbReference type="TreeFam" id="TF314924"/>
<dbReference type="PathwayCommons" id="Q8N6W0"/>
<dbReference type="SignaLink" id="Q8N6W0"/>
<dbReference type="BioGRID-ORCS" id="60680">
    <property type="hits" value="21 hits in 1151 CRISPR screens"/>
</dbReference>
<dbReference type="CD-CODE" id="DEE660B4">
    <property type="entry name" value="Stress granule"/>
</dbReference>
<dbReference type="ChiTaRS" id="CELF5">
    <property type="organism name" value="human"/>
</dbReference>
<dbReference type="EvolutionaryTrace" id="Q8N6W0"/>
<dbReference type="GenomeRNAi" id="60680"/>
<dbReference type="Pharos" id="Q8N6W0">
    <property type="development level" value="Tbio"/>
</dbReference>
<dbReference type="PRO" id="PR:Q8N6W0"/>
<dbReference type="Proteomes" id="UP000005640">
    <property type="component" value="Chromosome 19"/>
</dbReference>
<dbReference type="RNAct" id="Q8N6W0">
    <property type="molecule type" value="protein"/>
</dbReference>
<dbReference type="Bgee" id="ENSG00000161082">
    <property type="expression patterns" value="Expressed in endothelial cell and 130 other cell types or tissues"/>
</dbReference>
<dbReference type="ExpressionAtlas" id="Q8N6W0">
    <property type="expression patterns" value="baseline and differential"/>
</dbReference>
<dbReference type="GO" id="GO:0005737">
    <property type="term" value="C:cytoplasm"/>
    <property type="evidence" value="ECO:0000318"/>
    <property type="project" value="GO_Central"/>
</dbReference>
<dbReference type="GO" id="GO:0005634">
    <property type="term" value="C:nucleus"/>
    <property type="evidence" value="ECO:0000250"/>
    <property type="project" value="UniProtKB"/>
</dbReference>
<dbReference type="GO" id="GO:1990904">
    <property type="term" value="C:ribonucleoprotein complex"/>
    <property type="evidence" value="ECO:0000318"/>
    <property type="project" value="GO_Central"/>
</dbReference>
<dbReference type="GO" id="GO:0003729">
    <property type="term" value="F:mRNA binding"/>
    <property type="evidence" value="ECO:0000318"/>
    <property type="project" value="GO_Central"/>
</dbReference>
<dbReference type="GO" id="GO:0036002">
    <property type="term" value="F:pre-mRNA binding"/>
    <property type="evidence" value="ECO:0000303"/>
    <property type="project" value="UniProtKB"/>
</dbReference>
<dbReference type="GO" id="GO:0006376">
    <property type="term" value="P:mRNA splice site recognition"/>
    <property type="evidence" value="ECO:0000318"/>
    <property type="project" value="GO_Central"/>
</dbReference>
<dbReference type="GO" id="GO:0000381">
    <property type="term" value="P:regulation of alternative mRNA splicing, via spliceosome"/>
    <property type="evidence" value="ECO:0000314"/>
    <property type="project" value="UniProtKB"/>
</dbReference>
<dbReference type="CDD" id="cd12632">
    <property type="entry name" value="RRM1_CELF3_4_5_6"/>
    <property type="match status" value="1"/>
</dbReference>
<dbReference type="CDD" id="cd12635">
    <property type="entry name" value="RRM2_CELF3_4_5_6"/>
    <property type="match status" value="1"/>
</dbReference>
<dbReference type="CDD" id="cd12639">
    <property type="entry name" value="RRM3_CELF3_4_5_6"/>
    <property type="match status" value="1"/>
</dbReference>
<dbReference type="FunFam" id="3.30.70.330:FF:000007">
    <property type="entry name" value="CUGBP Elav-like family member 4 isoform 3"/>
    <property type="match status" value="1"/>
</dbReference>
<dbReference type="FunFam" id="3.30.70.330:FF:000010">
    <property type="entry name" value="CUGBP Elav-like family member 4 isoform 3"/>
    <property type="match status" value="1"/>
</dbReference>
<dbReference type="FunFam" id="3.30.70.330:FF:000069">
    <property type="entry name" value="CUGBP Elav-like family member 5 isoform X1"/>
    <property type="match status" value="1"/>
</dbReference>
<dbReference type="Gene3D" id="3.30.70.330">
    <property type="match status" value="3"/>
</dbReference>
<dbReference type="InterPro" id="IPR034648">
    <property type="entry name" value="CELF3/4/5/6_RRM1"/>
</dbReference>
<dbReference type="InterPro" id="IPR012677">
    <property type="entry name" value="Nucleotide-bd_a/b_plait_sf"/>
</dbReference>
<dbReference type="InterPro" id="IPR035979">
    <property type="entry name" value="RBD_domain_sf"/>
</dbReference>
<dbReference type="InterPro" id="IPR000504">
    <property type="entry name" value="RRM_dom"/>
</dbReference>
<dbReference type="PANTHER" id="PTHR24012">
    <property type="entry name" value="RNA BINDING PROTEIN"/>
    <property type="match status" value="1"/>
</dbReference>
<dbReference type="Pfam" id="PF00076">
    <property type="entry name" value="RRM_1"/>
    <property type="match status" value="3"/>
</dbReference>
<dbReference type="SMART" id="SM00360">
    <property type="entry name" value="RRM"/>
    <property type="match status" value="3"/>
</dbReference>
<dbReference type="SUPFAM" id="SSF54928">
    <property type="entry name" value="RNA-binding domain, RBD"/>
    <property type="match status" value="2"/>
</dbReference>
<dbReference type="PROSITE" id="PS50102">
    <property type="entry name" value="RRM"/>
    <property type="match status" value="3"/>
</dbReference>
<protein>
    <recommendedName>
        <fullName>CUGBP Elav-like family member 5</fullName>
        <shortName>CELF-5</shortName>
    </recommendedName>
    <alternativeName>
        <fullName>Bruno-like protein 5</fullName>
    </alternativeName>
    <alternativeName>
        <fullName>CUG-BP- and ETR-3-like factor 5</fullName>
    </alternativeName>
    <alternativeName>
        <fullName>RNA-binding protein BRUNOL-5</fullName>
    </alternativeName>
</protein>
<comment type="function">
    <text evidence="4">RNA-binding protein implicated in the regulation of pre-mRNA alternative splicing. Mediates exon inclusion and/or exclusion in pre-mRNA that are subject to tissue-specific and developmentally regulated alternative splicing. Specifically activates exon 5 inclusion of cardiac isoforms of TNNT2 during heart remodeling at the juvenile to adult transition. Binds to muscle-specific splicing enhancer (MSE) intronic sites flanking the alternative exon 5 of TNNT2 pre-mRNA.</text>
</comment>
<comment type="interaction">
    <interactant intactId="EBI-12139335">
        <id>Q8N6W0</id>
    </interactant>
    <interactant intactId="EBI-3867333">
        <id>A8MQ03</id>
        <label>CYSRT1</label>
    </interactant>
    <organismsDiffer>false</organismsDiffer>
    <experiments>3</experiments>
</comment>
<comment type="interaction">
    <interactant intactId="EBI-12139335">
        <id>Q8N6W0</id>
    </interactant>
    <interactant intactId="EBI-724310">
        <id>Q15038</id>
        <label>DAZAP2</label>
    </interactant>
    <organismsDiffer>false</organismsDiffer>
    <experiments>6</experiments>
</comment>
<comment type="interaction">
    <interactant intactId="EBI-12139335">
        <id>Q8N6W0</id>
    </interactant>
    <interactant intactId="EBI-11749135">
        <id>Q8IUG1</id>
        <label>KRTAP1-3</label>
    </interactant>
    <organismsDiffer>false</organismsDiffer>
    <experiments>3</experiments>
</comment>
<comment type="interaction">
    <interactant intactId="EBI-12139335">
        <id>Q8N6W0</id>
    </interactant>
    <interactant intactId="EBI-11953334">
        <id>P60328</id>
        <label>KRTAP12-3</label>
    </interactant>
    <organismsDiffer>false</organismsDiffer>
    <experiments>3</experiments>
</comment>
<comment type="interaction">
    <interactant intactId="EBI-12139335">
        <id>Q8N6W0</id>
    </interactant>
    <interactant intactId="EBI-11988175">
        <id>Q9BYP8</id>
        <label>KRTAP17-1</label>
    </interactant>
    <organismsDiffer>false</organismsDiffer>
    <experiments>3</experiments>
</comment>
<comment type="interaction">
    <interactant intactId="EBI-12139335">
        <id>Q8N6W0</id>
    </interactant>
    <interactant intactId="EBI-1048945">
        <id>Q3LI72</id>
        <label>KRTAP19-5</label>
    </interactant>
    <organismsDiffer>false</organismsDiffer>
    <experiments>3</experiments>
</comment>
<comment type="interaction">
    <interactant intactId="EBI-12139335">
        <id>Q8N6W0</id>
    </interactant>
    <interactant intactId="EBI-3957672">
        <id>Q6PEX3</id>
        <label>KRTAP26-1</label>
    </interactant>
    <organismsDiffer>false</organismsDiffer>
    <experiments>3</experiments>
</comment>
<comment type="interaction">
    <interactant intactId="EBI-12139335">
        <id>Q8N6W0</id>
    </interactant>
    <interactant intactId="EBI-751260">
        <id>Q9BYR7</id>
        <label>KRTAP3-2</label>
    </interactant>
    <organismsDiffer>false</organismsDiffer>
    <experiments>3</experiments>
</comment>
<comment type="interaction">
    <interactant intactId="EBI-12139335">
        <id>Q8N6W0</id>
    </interactant>
    <interactant intactId="EBI-3957694">
        <id>Q9BYR6</id>
        <label>KRTAP3-3</label>
    </interactant>
    <organismsDiffer>false</organismsDiffer>
    <experiments>3</experiments>
</comment>
<comment type="interaction">
    <interactant intactId="EBI-12139335">
        <id>Q8N6W0</id>
    </interactant>
    <interactant intactId="EBI-10172511">
        <id>Q9BYR5</id>
        <label>KRTAP4-2</label>
    </interactant>
    <organismsDiffer>false</organismsDiffer>
    <experiments>3</experiments>
</comment>
<comment type="interaction">
    <interactant intactId="EBI-12139335">
        <id>Q8N6W0</id>
    </interactant>
    <interactant intactId="EBI-12111050">
        <id>Q3LI64</id>
        <label>KRTAP6-1</label>
    </interactant>
    <organismsDiffer>false</organismsDiffer>
    <experiments>5</experiments>
</comment>
<comment type="interaction">
    <interactant intactId="EBI-12139335">
        <id>Q8N6W0</id>
    </interactant>
    <interactant intactId="EBI-11962084">
        <id>Q3LI66</id>
        <label>KRTAP6-2</label>
    </interactant>
    <organismsDiffer>false</organismsDiffer>
    <experiments>3</experiments>
</comment>
<comment type="interaction">
    <interactant intactId="EBI-12139335">
        <id>Q8N6W0</id>
    </interactant>
    <interactant intactId="EBI-22311199">
        <id>Q3LI67</id>
        <label>KRTAP6-3</label>
    </interactant>
    <organismsDiffer>false</organismsDiffer>
    <experiments>3</experiments>
</comment>
<comment type="interaction">
    <interactant intactId="EBI-12139335">
        <id>Q8N6W0</id>
    </interactant>
    <interactant intactId="EBI-18394498">
        <id>Q8IUC3</id>
        <label>KRTAP7-1</label>
    </interactant>
    <organismsDiffer>false</organismsDiffer>
    <experiments>3</experiments>
</comment>
<comment type="interaction">
    <interactant intactId="EBI-12139335">
        <id>Q8N6W0</id>
    </interactant>
    <interactant intactId="EBI-1043191">
        <id>Q9BYQ3</id>
        <label>KRTAP9-3</label>
    </interactant>
    <organismsDiffer>false</organismsDiffer>
    <experiments>3</experiments>
</comment>
<comment type="interaction">
    <interactant intactId="EBI-12139335">
        <id>Q8N6W0</id>
    </interactant>
    <interactant intactId="EBI-11958364">
        <id>Q9BYQ0</id>
        <label>KRTAP9-8</label>
    </interactant>
    <organismsDiffer>false</organismsDiffer>
    <experiments>3</experiments>
</comment>
<comment type="interaction">
    <interactant intactId="EBI-12139335">
        <id>Q8N6W0</id>
    </interactant>
    <interactant intactId="EBI-22310682">
        <id>P0DPK4</id>
        <label>NOTCH2NLC</label>
    </interactant>
    <organismsDiffer>false</organismsDiffer>
    <experiments>3</experiments>
</comment>
<comment type="interaction">
    <interactant intactId="EBI-12139335">
        <id>Q8N6W0</id>
    </interactant>
    <interactant intactId="EBI-740924">
        <id>Q9NZ81</id>
        <label>PRR13</label>
    </interactant>
    <organismsDiffer>false</organismsDiffer>
    <experiments>3</experiments>
</comment>
<comment type="interaction">
    <interactant intactId="EBI-12139335">
        <id>Q8N6W0</id>
    </interactant>
    <interactant intactId="EBI-2823850">
        <id>A0AV96</id>
        <label>RBM47</label>
    </interactant>
    <organismsDiffer>false</organismsDiffer>
    <experiments>3</experiments>
</comment>
<comment type="interaction">
    <interactant intactId="EBI-12139335">
        <id>Q8N6W0</id>
    </interactant>
    <interactant intactId="EBI-10249550">
        <id>Q6EMK4</id>
        <label>VASN</label>
    </interactant>
    <organismsDiffer>false</organismsDiffer>
    <experiments>3</experiments>
</comment>
<comment type="subcellular location">
    <subcellularLocation>
        <location evidence="1">Nucleus</location>
    </subcellularLocation>
    <subcellularLocation>
        <location evidence="1">Cytoplasm</location>
    </subcellularLocation>
</comment>
<comment type="alternative products">
    <event type="alternative splicing"/>
    <isoform>
        <id>Q8N6W0-1</id>
        <name>1</name>
        <sequence type="displayed"/>
    </isoform>
    <isoform>
        <id>Q8N6W0-2</id>
        <name>2</name>
        <sequence type="described" ref="VSP_026844 VSP_026845 VSP_026846"/>
    </isoform>
</comment>
<comment type="tissue specificity">
    <text evidence="4">Expressed in brain.</text>
</comment>
<comment type="similarity">
    <text evidence="7">Belongs to the CELF/BRUNOL family.</text>
</comment>
<comment type="sequence caution" evidence="7">
    <conflict type="erroneous initiation">
        <sequence resource="EMBL-CDS" id="AAC27666"/>
    </conflict>
</comment>
<comment type="sequence caution" evidence="7">
    <conflict type="erroneous termination">
        <sequence resource="EMBL-CDS" id="AAK07476"/>
    </conflict>
    <text>Truncated C-terminus.</text>
</comment>
<comment type="sequence caution" evidence="7">
    <conflict type="erroneous initiation">
        <sequence resource="EMBL-CDS" id="BAD92304"/>
    </conflict>
</comment>
<sequence length="485" mass="52355">MARLTESEARRQQQQLLQPRPSPVGSSGPEPPGGQPDGMKDLDAIKLFVGQIPRHLDEKDLKPLFEQFGRIYELTVLKDPYTGMHKGCAFLTYCARDSAIKAQTALHEQKTLPGMARPIQVKPADSESRGGRDRKLFVGMLNKQQSEEDVLRLFQPFGVIDECTVLRGPDGSSKGCAFVKFSSHTEAQAAIHALHGSQTMPGASSSLVVKFADTDKERTLRRMQQMVGQLGILTPSLTLPFSPYSAYAQALMQQQTTVLSTSGSYLSPGVAFSPCHIQQIGAVSLNGLPATPIAPASGLHSPPLLGTTAVPGLVAPITNGFAGVVPFPGGHPALETVYANGLVPYPAQSPTVAETLHPAFSGVQQYTAMYPTAAITPIAHSVPQPPPLLQQQQREGPEGCNLFIYHLPQEFGDTELTQMFLPFGNIISSKVFMDRATNQSKCFGFVSFDNPASAQAAIQAMNGFQIGMKRLKVQLKRPKDPGHPY</sequence>
<proteinExistence type="evidence at protein level"/>
<accession>Q8N6W0</accession>
<accession>D6W614</accession>
<accession>O75253</accession>
<accession>Q59GP2</accession>
<accession>Q86VW6</accession>
<accession>Q9BZC0</accession>
<accession>Q9NR86</accession>
<name>CELF5_HUMAN</name>
<gene>
    <name type="primary">CELF5</name>
    <name type="synonym">BRUNOL5</name>
</gene>
<feature type="chain" id="PRO_0000295227" description="CUGBP Elav-like family member 5">
    <location>
        <begin position="1"/>
        <end position="485"/>
    </location>
</feature>
<feature type="domain" description="RRM 1" evidence="2">
    <location>
        <begin position="45"/>
        <end position="126"/>
    </location>
</feature>
<feature type="domain" description="RRM 2" evidence="2">
    <location>
        <begin position="134"/>
        <end position="214"/>
    </location>
</feature>
<feature type="domain" description="RRM 3" evidence="2">
    <location>
        <begin position="400"/>
        <end position="478"/>
    </location>
</feature>
<feature type="region of interest" description="Disordered" evidence="3">
    <location>
        <begin position="1"/>
        <end position="40"/>
    </location>
</feature>
<feature type="compositionally biased region" description="Basic and acidic residues" evidence="3">
    <location>
        <begin position="1"/>
        <end position="11"/>
    </location>
</feature>
<feature type="compositionally biased region" description="Low complexity" evidence="3">
    <location>
        <begin position="12"/>
        <end position="28"/>
    </location>
</feature>
<feature type="splice variant" id="VSP_026844" description="In isoform 2." evidence="6">
    <location>
        <begin position="298"/>
        <end position="322"/>
    </location>
</feature>
<feature type="splice variant" id="VSP_026845" description="In isoform 2." evidence="6">
    <original>PEGCNLFIYHLPQEFGDTELTQMFLPFGNIISSKVFMD</original>
    <variation>VWRHGADADVPTLRQYHFLQGVYGSSYQPEQVFRLREL</variation>
    <location>
        <begin position="397"/>
        <end position="434"/>
    </location>
</feature>
<feature type="splice variant" id="VSP_026846" description="In isoform 2." evidence="6">
    <location>
        <begin position="435"/>
        <end position="485"/>
    </location>
</feature>
<feature type="sequence variant" id="VAR_033264" description="In dbSNP:rs17854481." evidence="5">
    <original>F</original>
    <variation>L</variation>
    <location>
        <position position="65"/>
    </location>
</feature>
<feature type="sequence conflict" description="In Ref. 5; AAK07476." evidence="7" ref="5">
    <original>I</original>
    <variation>V</variation>
    <location>
        <position position="293"/>
    </location>
</feature>
<feature type="strand" evidence="8">
    <location>
        <begin position="135"/>
        <end position="140"/>
    </location>
</feature>
<feature type="helix" evidence="8">
    <location>
        <begin position="147"/>
        <end position="154"/>
    </location>
</feature>
<feature type="turn" evidence="8">
    <location>
        <begin position="155"/>
        <end position="157"/>
    </location>
</feature>
<feature type="strand" evidence="8">
    <location>
        <begin position="160"/>
        <end position="167"/>
    </location>
</feature>
<feature type="strand" evidence="8">
    <location>
        <begin position="169"/>
        <end position="171"/>
    </location>
</feature>
<feature type="strand" evidence="8">
    <location>
        <begin position="173"/>
        <end position="183"/>
    </location>
</feature>
<feature type="helix" evidence="8">
    <location>
        <begin position="184"/>
        <end position="194"/>
    </location>
</feature>
<feature type="strand" evidence="8">
    <location>
        <begin position="208"/>
        <end position="212"/>
    </location>
</feature>
<reference key="1">
    <citation type="submission" date="2005-03" db="EMBL/GenBank/DDBJ databases">
        <authorList>
            <person name="Totoki Y."/>
            <person name="Toyoda A."/>
            <person name="Takeda T."/>
            <person name="Sakaki Y."/>
            <person name="Tanaka A."/>
            <person name="Yokoyama S."/>
            <person name="Ohara O."/>
            <person name="Nagase T."/>
            <person name="Kikuno R.F."/>
        </authorList>
    </citation>
    <scope>NUCLEOTIDE SEQUENCE [LARGE SCALE MRNA] (ISOFORM 2)</scope>
    <source>
        <tissue>Brain</tissue>
    </source>
</reference>
<reference key="2">
    <citation type="journal article" date="2004" name="Nature">
        <title>The DNA sequence and biology of human chromosome 19.</title>
        <authorList>
            <person name="Grimwood J."/>
            <person name="Gordon L.A."/>
            <person name="Olsen A.S."/>
            <person name="Terry A."/>
            <person name="Schmutz J."/>
            <person name="Lamerdin J.E."/>
            <person name="Hellsten U."/>
            <person name="Goodstein D."/>
            <person name="Couronne O."/>
            <person name="Tran-Gyamfi M."/>
            <person name="Aerts A."/>
            <person name="Altherr M."/>
            <person name="Ashworth L."/>
            <person name="Bajorek E."/>
            <person name="Black S."/>
            <person name="Branscomb E."/>
            <person name="Caenepeel S."/>
            <person name="Carrano A.V."/>
            <person name="Caoile C."/>
            <person name="Chan Y.M."/>
            <person name="Christensen M."/>
            <person name="Cleland C.A."/>
            <person name="Copeland A."/>
            <person name="Dalin E."/>
            <person name="Dehal P."/>
            <person name="Denys M."/>
            <person name="Detter J.C."/>
            <person name="Escobar J."/>
            <person name="Flowers D."/>
            <person name="Fotopulos D."/>
            <person name="Garcia C."/>
            <person name="Georgescu A.M."/>
            <person name="Glavina T."/>
            <person name="Gomez M."/>
            <person name="Gonzales E."/>
            <person name="Groza M."/>
            <person name="Hammon N."/>
            <person name="Hawkins T."/>
            <person name="Haydu L."/>
            <person name="Ho I."/>
            <person name="Huang W."/>
            <person name="Israni S."/>
            <person name="Jett J."/>
            <person name="Kadner K."/>
            <person name="Kimball H."/>
            <person name="Kobayashi A."/>
            <person name="Larionov V."/>
            <person name="Leem S.-H."/>
            <person name="Lopez F."/>
            <person name="Lou Y."/>
            <person name="Lowry S."/>
            <person name="Malfatti S."/>
            <person name="Martinez D."/>
            <person name="McCready P.M."/>
            <person name="Medina C."/>
            <person name="Morgan J."/>
            <person name="Nelson K."/>
            <person name="Nolan M."/>
            <person name="Ovcharenko I."/>
            <person name="Pitluck S."/>
            <person name="Pollard M."/>
            <person name="Popkie A.P."/>
            <person name="Predki P."/>
            <person name="Quan G."/>
            <person name="Ramirez L."/>
            <person name="Rash S."/>
            <person name="Retterer J."/>
            <person name="Rodriguez A."/>
            <person name="Rogers S."/>
            <person name="Salamov A."/>
            <person name="Salazar A."/>
            <person name="She X."/>
            <person name="Smith D."/>
            <person name="Slezak T."/>
            <person name="Solovyev V."/>
            <person name="Thayer N."/>
            <person name="Tice H."/>
            <person name="Tsai M."/>
            <person name="Ustaszewska A."/>
            <person name="Vo N."/>
            <person name="Wagner M."/>
            <person name="Wheeler J."/>
            <person name="Wu K."/>
            <person name="Xie G."/>
            <person name="Yang J."/>
            <person name="Dubchak I."/>
            <person name="Furey T.S."/>
            <person name="DeJong P."/>
            <person name="Dickson M."/>
            <person name="Gordon D."/>
            <person name="Eichler E.E."/>
            <person name="Pennacchio L.A."/>
            <person name="Richardson P."/>
            <person name="Stubbs L."/>
            <person name="Rokhsar D.S."/>
            <person name="Myers R.M."/>
            <person name="Rubin E.M."/>
            <person name="Lucas S.M."/>
        </authorList>
    </citation>
    <scope>NUCLEOTIDE SEQUENCE [LARGE SCALE GENOMIC DNA]</scope>
</reference>
<reference key="3">
    <citation type="submission" date="2005-09" db="EMBL/GenBank/DDBJ databases">
        <authorList>
            <person name="Mural R.J."/>
            <person name="Istrail S."/>
            <person name="Sutton G.G."/>
            <person name="Florea L."/>
            <person name="Halpern A.L."/>
            <person name="Mobarry C.M."/>
            <person name="Lippert R."/>
            <person name="Walenz B."/>
            <person name="Shatkay H."/>
            <person name="Dew I."/>
            <person name="Miller J.R."/>
            <person name="Flanigan M.J."/>
            <person name="Edwards N.J."/>
            <person name="Bolanos R."/>
            <person name="Fasulo D."/>
            <person name="Halldorsson B.V."/>
            <person name="Hannenhalli S."/>
            <person name="Turner R."/>
            <person name="Yooseph S."/>
            <person name="Lu F."/>
            <person name="Nusskern D.R."/>
            <person name="Shue B.C."/>
            <person name="Zheng X.H."/>
            <person name="Zhong F."/>
            <person name="Delcher A.L."/>
            <person name="Huson D.H."/>
            <person name="Kravitz S.A."/>
            <person name="Mouchard L."/>
            <person name="Reinert K."/>
            <person name="Remington K.A."/>
            <person name="Clark A.G."/>
            <person name="Waterman M.S."/>
            <person name="Eichler E.E."/>
            <person name="Adams M.D."/>
            <person name="Hunkapiller M.W."/>
            <person name="Myers E.W."/>
            <person name="Venter J.C."/>
        </authorList>
    </citation>
    <scope>NUCLEOTIDE SEQUENCE [LARGE SCALE GENOMIC DNA]</scope>
</reference>
<reference key="4">
    <citation type="journal article" date="2004" name="Genome Res.">
        <title>The status, quality, and expansion of the NIH full-length cDNA project: the Mammalian Gene Collection (MGC).</title>
        <authorList>
            <consortium name="The MGC Project Team"/>
        </authorList>
    </citation>
    <scope>NUCLEOTIDE SEQUENCE [LARGE SCALE MRNA] (ISOFORM 1)</scope>
    <scope>VARIANT LEU-65</scope>
    <source>
        <tissue>Brain</tissue>
    </source>
</reference>
<reference key="5">
    <citation type="journal article" date="2001" name="Mol. Cell. Biol.">
        <title>The CELF family of RNA binding proteins is implicated in cell-specific and developmentally regulated alternative splicing.</title>
        <authorList>
            <person name="Ladd A.N."/>
            <person name="Charlet-B N."/>
            <person name="Cooper T.A."/>
        </authorList>
    </citation>
    <scope>NUCLEOTIDE SEQUENCE OF 1-482 (ISOFORM 1)</scope>
    <scope>FUNCTION</scope>
    <scope>RNA-BINDING</scope>
    <scope>TISSUE SPECIFICITY</scope>
    <source>
        <tissue>Brain</tissue>
    </source>
</reference>
<reference key="6">
    <citation type="journal article" date="2000" name="J. Biol. Chem.">
        <title>A family of human RNA-binding proteins related to the Drosophila Bruno translational regulator.</title>
        <authorList>
            <person name="Good P.J."/>
            <person name="Chen Q."/>
            <person name="Warner S.J."/>
            <person name="Herring D.C."/>
        </authorList>
    </citation>
    <scope>NUCLEOTIDE SEQUENCE [MRNA] OF 396-478 (ISOFORM 1)</scope>
    <source>
        <tissue>Brain</tissue>
    </source>
</reference>
<reference key="7">
    <citation type="submission" date="2006-10" db="PDB data bank">
        <title>Solution structure of RNA-binding domain in bruno-like 5 RNA-binding protein.</title>
        <authorList>
            <consortium name="RIKEN structural genomics initiative (RSGI)"/>
        </authorList>
    </citation>
    <scope>STRUCTURE BY NMR OF 126-217</scope>
</reference>
<evidence type="ECO:0000250" key="1"/>
<evidence type="ECO:0000255" key="2">
    <source>
        <dbReference type="PROSITE-ProRule" id="PRU00176"/>
    </source>
</evidence>
<evidence type="ECO:0000256" key="3">
    <source>
        <dbReference type="SAM" id="MobiDB-lite"/>
    </source>
</evidence>
<evidence type="ECO:0000269" key="4">
    <source>
    </source>
</evidence>
<evidence type="ECO:0000269" key="5">
    <source>
    </source>
</evidence>
<evidence type="ECO:0000303" key="6">
    <source ref="1"/>
</evidence>
<evidence type="ECO:0000305" key="7"/>
<evidence type="ECO:0007829" key="8">
    <source>
        <dbReference type="PDB" id="2DNH"/>
    </source>
</evidence>
<keyword id="KW-0002">3D-structure</keyword>
<keyword id="KW-0025">Alternative splicing</keyword>
<keyword id="KW-0963">Cytoplasm</keyword>
<keyword id="KW-0507">mRNA processing</keyword>
<keyword id="KW-0539">Nucleus</keyword>
<keyword id="KW-1267">Proteomics identification</keyword>
<keyword id="KW-1185">Reference proteome</keyword>
<keyword id="KW-0677">Repeat</keyword>
<keyword id="KW-0694">RNA-binding</keyword>